<dbReference type="EMBL" id="AE016825">
    <property type="protein sequence ID" value="AAQ61846.1"/>
    <property type="molecule type" value="Genomic_DNA"/>
</dbReference>
<dbReference type="RefSeq" id="WP_011137733.1">
    <property type="nucleotide sequence ID" value="NC_005085.1"/>
</dbReference>
<dbReference type="SMR" id="Q7NQF2"/>
<dbReference type="STRING" id="243365.CV_4186"/>
<dbReference type="GeneID" id="66366342"/>
<dbReference type="KEGG" id="cvi:CV_4186"/>
<dbReference type="eggNOG" id="COG0087">
    <property type="taxonomic scope" value="Bacteria"/>
</dbReference>
<dbReference type="HOGENOM" id="CLU_044142_4_1_4"/>
<dbReference type="OrthoDB" id="9806135at2"/>
<dbReference type="Proteomes" id="UP000001424">
    <property type="component" value="Chromosome"/>
</dbReference>
<dbReference type="GO" id="GO:0022625">
    <property type="term" value="C:cytosolic large ribosomal subunit"/>
    <property type="evidence" value="ECO:0007669"/>
    <property type="project" value="TreeGrafter"/>
</dbReference>
<dbReference type="GO" id="GO:0019843">
    <property type="term" value="F:rRNA binding"/>
    <property type="evidence" value="ECO:0007669"/>
    <property type="project" value="UniProtKB-UniRule"/>
</dbReference>
<dbReference type="GO" id="GO:0003735">
    <property type="term" value="F:structural constituent of ribosome"/>
    <property type="evidence" value="ECO:0007669"/>
    <property type="project" value="InterPro"/>
</dbReference>
<dbReference type="GO" id="GO:0006412">
    <property type="term" value="P:translation"/>
    <property type="evidence" value="ECO:0007669"/>
    <property type="project" value="UniProtKB-UniRule"/>
</dbReference>
<dbReference type="FunFam" id="2.40.30.10:FF:000004">
    <property type="entry name" value="50S ribosomal protein L3"/>
    <property type="match status" value="1"/>
</dbReference>
<dbReference type="FunFam" id="3.30.160.810:FF:000001">
    <property type="entry name" value="50S ribosomal protein L3"/>
    <property type="match status" value="1"/>
</dbReference>
<dbReference type="Gene3D" id="3.30.160.810">
    <property type="match status" value="1"/>
</dbReference>
<dbReference type="Gene3D" id="2.40.30.10">
    <property type="entry name" value="Translation factors"/>
    <property type="match status" value="1"/>
</dbReference>
<dbReference type="HAMAP" id="MF_01325_B">
    <property type="entry name" value="Ribosomal_uL3_B"/>
    <property type="match status" value="1"/>
</dbReference>
<dbReference type="InterPro" id="IPR000597">
    <property type="entry name" value="Ribosomal_uL3"/>
</dbReference>
<dbReference type="InterPro" id="IPR019927">
    <property type="entry name" value="Ribosomal_uL3_bac/org-type"/>
</dbReference>
<dbReference type="InterPro" id="IPR019926">
    <property type="entry name" value="Ribosomal_uL3_CS"/>
</dbReference>
<dbReference type="InterPro" id="IPR009000">
    <property type="entry name" value="Transl_B-barrel_sf"/>
</dbReference>
<dbReference type="NCBIfam" id="TIGR03625">
    <property type="entry name" value="L3_bact"/>
    <property type="match status" value="1"/>
</dbReference>
<dbReference type="PANTHER" id="PTHR11229">
    <property type="entry name" value="50S RIBOSOMAL PROTEIN L3"/>
    <property type="match status" value="1"/>
</dbReference>
<dbReference type="PANTHER" id="PTHR11229:SF16">
    <property type="entry name" value="LARGE RIBOSOMAL SUBUNIT PROTEIN UL3C"/>
    <property type="match status" value="1"/>
</dbReference>
<dbReference type="Pfam" id="PF00297">
    <property type="entry name" value="Ribosomal_L3"/>
    <property type="match status" value="1"/>
</dbReference>
<dbReference type="SUPFAM" id="SSF50447">
    <property type="entry name" value="Translation proteins"/>
    <property type="match status" value="1"/>
</dbReference>
<dbReference type="PROSITE" id="PS00474">
    <property type="entry name" value="RIBOSOMAL_L3"/>
    <property type="match status" value="1"/>
</dbReference>
<gene>
    <name evidence="1" type="primary">rplC</name>
    <name type="ordered locus">CV_4186</name>
</gene>
<sequence>MSLGLVGRKVGMTRIFAEDGATIPVTVLDMSSNRVTQIKTAETDGYNAVQVTYGSKKASRVNKADAGHFAKAGVEAGLGLAEFALSADALSNFKPGDAIAVEIFTVGQLVDVTGTSKGKGFSGVIKRHNFSSNRASHGNSRSHNTPGSIGQAQDPGRVFPGKRMAGQYGNVKSTVQCLEIVRVDAERQLILVKGAVPGAKNGDVVVRPSVKAGA</sequence>
<name>RL3_CHRVO</name>
<keyword id="KW-0488">Methylation</keyword>
<keyword id="KW-1185">Reference proteome</keyword>
<keyword id="KW-0687">Ribonucleoprotein</keyword>
<keyword id="KW-0689">Ribosomal protein</keyword>
<keyword id="KW-0694">RNA-binding</keyword>
<keyword id="KW-0699">rRNA-binding</keyword>
<comment type="function">
    <text evidence="1">One of the primary rRNA binding proteins, it binds directly near the 3'-end of the 23S rRNA, where it nucleates assembly of the 50S subunit.</text>
</comment>
<comment type="subunit">
    <text evidence="1">Part of the 50S ribosomal subunit. Forms a cluster with proteins L14 and L19.</text>
</comment>
<comment type="PTM">
    <text evidence="1">Methylated by PrmB.</text>
</comment>
<comment type="similarity">
    <text evidence="1">Belongs to the universal ribosomal protein uL3 family.</text>
</comment>
<protein>
    <recommendedName>
        <fullName evidence="1">Large ribosomal subunit protein uL3</fullName>
    </recommendedName>
    <alternativeName>
        <fullName evidence="3">50S ribosomal protein L3</fullName>
    </alternativeName>
</protein>
<evidence type="ECO:0000255" key="1">
    <source>
        <dbReference type="HAMAP-Rule" id="MF_01325"/>
    </source>
</evidence>
<evidence type="ECO:0000256" key="2">
    <source>
        <dbReference type="SAM" id="MobiDB-lite"/>
    </source>
</evidence>
<evidence type="ECO:0000305" key="3"/>
<accession>Q7NQF2</accession>
<proteinExistence type="inferred from homology"/>
<reference key="1">
    <citation type="journal article" date="2003" name="Proc. Natl. Acad. Sci. U.S.A.">
        <title>The complete genome sequence of Chromobacterium violaceum reveals remarkable and exploitable bacterial adaptability.</title>
        <authorList>
            <person name="Vasconcelos A.T.R."/>
            <person name="de Almeida D.F."/>
            <person name="Hungria M."/>
            <person name="Guimaraes C.T."/>
            <person name="Antonio R.V."/>
            <person name="Almeida F.C."/>
            <person name="de Almeida L.G.P."/>
            <person name="de Almeida R."/>
            <person name="Alves-Gomes J.A."/>
            <person name="Andrade E.M."/>
            <person name="Araripe J."/>
            <person name="de Araujo M.F.F."/>
            <person name="Astolfi-Filho S."/>
            <person name="Azevedo V."/>
            <person name="Baptista A.J."/>
            <person name="Bataus L.A.M."/>
            <person name="Batista J.S."/>
            <person name="Belo A."/>
            <person name="van den Berg C."/>
            <person name="Bogo M."/>
            <person name="Bonatto S."/>
            <person name="Bordignon J."/>
            <person name="Brigido M.M."/>
            <person name="Brito C.A."/>
            <person name="Brocchi M."/>
            <person name="Burity H.A."/>
            <person name="Camargo A.A."/>
            <person name="Cardoso D.D.P."/>
            <person name="Carneiro N.P."/>
            <person name="Carraro D.M."/>
            <person name="Carvalho C.M.B."/>
            <person name="Cascardo J.C.M."/>
            <person name="Cavada B.S."/>
            <person name="Chueire L.M.O."/>
            <person name="Creczynski-Pasa T.B."/>
            <person name="Cunha-Junior N.C."/>
            <person name="Fagundes N."/>
            <person name="Falcao C.L."/>
            <person name="Fantinatti F."/>
            <person name="Farias I.P."/>
            <person name="Felipe M.S.S."/>
            <person name="Ferrari L.P."/>
            <person name="Ferro J.A."/>
            <person name="Ferro M.I.T."/>
            <person name="Franco G.R."/>
            <person name="Freitas N.S.A."/>
            <person name="Furlan L.R."/>
            <person name="Gazzinelli R.T."/>
            <person name="Gomes E.A."/>
            <person name="Goncalves P.R."/>
            <person name="Grangeiro T.B."/>
            <person name="Grattapaglia D."/>
            <person name="Grisard E.C."/>
            <person name="Hanna E.S."/>
            <person name="Jardim S.N."/>
            <person name="Laurino J."/>
            <person name="Leoi L.C.T."/>
            <person name="Lima L.F.A."/>
            <person name="Loureiro M.F."/>
            <person name="Lyra M.C.C.P."/>
            <person name="Madeira H.M.F."/>
            <person name="Manfio G.P."/>
            <person name="Maranhao A.Q."/>
            <person name="Martins W.S."/>
            <person name="di Mauro S.M.Z."/>
            <person name="de Medeiros S.R.B."/>
            <person name="Meissner R.V."/>
            <person name="Moreira M.A.M."/>
            <person name="Nascimento F.F."/>
            <person name="Nicolas M.F."/>
            <person name="Oliveira J.G."/>
            <person name="Oliveira S.C."/>
            <person name="Paixao R.F.C."/>
            <person name="Parente J.A."/>
            <person name="Pedrosa F.O."/>
            <person name="Pena S.D.J."/>
            <person name="Pereira J.O."/>
            <person name="Pereira M."/>
            <person name="Pinto L.S.R.C."/>
            <person name="Pinto L.S."/>
            <person name="Porto J.I.R."/>
            <person name="Potrich D.P."/>
            <person name="Ramalho-Neto C.E."/>
            <person name="Reis A.M.M."/>
            <person name="Rigo L.U."/>
            <person name="Rondinelli E."/>
            <person name="Santos E.B.P."/>
            <person name="Santos F.R."/>
            <person name="Schneider M.P.C."/>
            <person name="Seuanez H.N."/>
            <person name="Silva A.M.R."/>
            <person name="da Silva A.L.C."/>
            <person name="Silva D.W."/>
            <person name="Silva R."/>
            <person name="Simoes I.C."/>
            <person name="Simon D."/>
            <person name="Soares C.M.A."/>
            <person name="Soares R.B.A."/>
            <person name="Souza E.M."/>
            <person name="Souza K.R.L."/>
            <person name="Souza R.C."/>
            <person name="Steffens M.B.R."/>
            <person name="Steindel M."/>
            <person name="Teixeira S.R."/>
            <person name="Urmenyi T."/>
            <person name="Vettore A."/>
            <person name="Wassem R."/>
            <person name="Zaha A."/>
            <person name="Simpson A.J.G."/>
        </authorList>
    </citation>
    <scope>NUCLEOTIDE SEQUENCE [LARGE SCALE GENOMIC DNA]</scope>
    <source>
        <strain>ATCC 12472 / DSM 30191 / JCM 1249 / CCUG 213 / NBRC 12614 / NCIMB 9131 / NCTC 9757 / MK</strain>
    </source>
</reference>
<organism>
    <name type="scientific">Chromobacterium violaceum (strain ATCC 12472 / DSM 30191 / JCM 1249 / CCUG 213 / NBRC 12614 / NCIMB 9131 / NCTC 9757 / MK)</name>
    <dbReference type="NCBI Taxonomy" id="243365"/>
    <lineage>
        <taxon>Bacteria</taxon>
        <taxon>Pseudomonadati</taxon>
        <taxon>Pseudomonadota</taxon>
        <taxon>Betaproteobacteria</taxon>
        <taxon>Neisseriales</taxon>
        <taxon>Chromobacteriaceae</taxon>
        <taxon>Chromobacterium</taxon>
    </lineage>
</organism>
<feature type="chain" id="PRO_0000077089" description="Large ribosomal subunit protein uL3">
    <location>
        <begin position="1"/>
        <end position="214"/>
    </location>
</feature>
<feature type="region of interest" description="Disordered" evidence="2">
    <location>
        <begin position="130"/>
        <end position="163"/>
    </location>
</feature>
<feature type="compositionally biased region" description="Polar residues" evidence="2">
    <location>
        <begin position="130"/>
        <end position="151"/>
    </location>
</feature>
<feature type="modified residue" description="N5-methylglutamine" evidence="1">
    <location>
        <position position="153"/>
    </location>
</feature>